<comment type="function">
    <text evidence="3">Alpha-ketoglutarate-dependent dioxygenase that in vitro catalyzes the regio- and stereoselective hydroxylation of L-ornithine and L-arginine, leading to (3S)-3-hydroxy-L-ornithine and (3S)-3-hydroxy-L-arginine, respectively. Cannot use L-lysine, D-ornithine, or D-arginine as substrate.</text>
</comment>
<comment type="catalytic activity">
    <reaction evidence="3">
        <text>L-ornithine + 2-oxoglutarate + O2 = (3S)-3-hydroxy-L-ornithine + succinate + CO2</text>
        <dbReference type="Rhea" id="RHEA:40931"/>
        <dbReference type="ChEBI" id="CHEBI:15379"/>
        <dbReference type="ChEBI" id="CHEBI:16526"/>
        <dbReference type="ChEBI" id="CHEBI:16810"/>
        <dbReference type="ChEBI" id="CHEBI:30031"/>
        <dbReference type="ChEBI" id="CHEBI:46911"/>
        <dbReference type="ChEBI" id="CHEBI:77411"/>
    </reaction>
</comment>
<comment type="catalytic activity">
    <reaction evidence="3">
        <text>L-arginine + 2-oxoglutarate + O2 = (2S,3S)-hydroxyarginine + succinate + CO2</text>
        <dbReference type="Rhea" id="RHEA:36607"/>
        <dbReference type="ChEBI" id="CHEBI:15379"/>
        <dbReference type="ChEBI" id="CHEBI:16526"/>
        <dbReference type="ChEBI" id="CHEBI:16810"/>
        <dbReference type="ChEBI" id="CHEBI:30031"/>
        <dbReference type="ChEBI" id="CHEBI:32682"/>
        <dbReference type="ChEBI" id="CHEBI:73938"/>
        <dbReference type="EC" id="1.14.11.41"/>
    </reaction>
</comment>
<comment type="cofactor">
    <cofactor evidence="1">
        <name>Fe(2+)</name>
        <dbReference type="ChEBI" id="CHEBI:29033"/>
    </cofactor>
    <text evidence="1">Binds 1 Fe(2+) ion per subunit.</text>
</comment>
<comment type="biotechnology">
    <text evidence="6">Being totally regio- and stereoselective, this enzyme is of interest for biocatalytic purposes to produce chiral scaffolds that are of synthetic value in the preparation of more complex functionalized chiral molecules such as natural products and analogs.</text>
</comment>
<comment type="similarity">
    <text evidence="5">Belongs to the clavaminate synthase family.</text>
</comment>
<gene>
    <name evidence="7" type="ordered locus">Caci_3456</name>
</gene>
<feature type="chain" id="PRO_0000435697" description="L-ornithine/L-arginine 3-hydroxylase">
    <location>
        <begin position="1"/>
        <end position="343"/>
    </location>
</feature>
<feature type="region of interest" description="Disordered" evidence="2">
    <location>
        <begin position="199"/>
        <end position="218"/>
    </location>
</feature>
<feature type="compositionally biased region" description="Polar residues" evidence="2">
    <location>
        <begin position="199"/>
        <end position="215"/>
    </location>
</feature>
<feature type="binding site" evidence="1">
    <location>
        <position position="147"/>
    </location>
    <ligand>
        <name>Fe cation</name>
        <dbReference type="ChEBI" id="CHEBI:24875"/>
    </ligand>
</feature>
<feature type="binding site" evidence="1">
    <location>
        <position position="149"/>
    </location>
    <ligand>
        <name>Fe cation</name>
        <dbReference type="ChEBI" id="CHEBI:24875"/>
    </ligand>
</feature>
<feature type="binding site" evidence="1">
    <location>
        <position position="302"/>
    </location>
    <ligand>
        <name>Fe cation</name>
        <dbReference type="ChEBI" id="CHEBI:24875"/>
    </ligand>
</feature>
<feature type="binding site" evidence="1">
    <location>
        <position position="316"/>
    </location>
    <ligand>
        <name>2-oxoglutarate</name>
        <dbReference type="ChEBI" id="CHEBI:16810"/>
    </ligand>
</feature>
<accession>C7Q942</accession>
<name>ORR3O_CATAD</name>
<evidence type="ECO:0000250" key="1">
    <source>
        <dbReference type="UniProtKB" id="Q9Z4Z5"/>
    </source>
</evidence>
<evidence type="ECO:0000256" key="2">
    <source>
        <dbReference type="SAM" id="MobiDB-lite"/>
    </source>
</evidence>
<evidence type="ECO:0000269" key="3">
    <source ref="2"/>
</evidence>
<evidence type="ECO:0000303" key="4">
    <source ref="2"/>
</evidence>
<evidence type="ECO:0000305" key="5"/>
<evidence type="ECO:0000305" key="6">
    <source ref="2"/>
</evidence>
<evidence type="ECO:0000312" key="7">
    <source>
        <dbReference type="EMBL" id="ACU72362.1"/>
    </source>
</evidence>
<dbReference type="EC" id="1.14.11.-" evidence="3"/>
<dbReference type="EC" id="1.14.11.41" evidence="3"/>
<dbReference type="EMBL" id="CP001700">
    <property type="protein sequence ID" value="ACU72362.1"/>
    <property type="molecule type" value="Genomic_DNA"/>
</dbReference>
<dbReference type="RefSeq" id="WP_012787655.1">
    <property type="nucleotide sequence ID" value="NC_013131.1"/>
</dbReference>
<dbReference type="SMR" id="C7Q942"/>
<dbReference type="STRING" id="479433.Caci_3456"/>
<dbReference type="KEGG" id="cai:Caci_3456"/>
<dbReference type="eggNOG" id="COG2175">
    <property type="taxonomic scope" value="Bacteria"/>
</dbReference>
<dbReference type="HOGENOM" id="CLU_044078_0_0_11"/>
<dbReference type="InParanoid" id="C7Q942"/>
<dbReference type="OrthoDB" id="3872700at2"/>
<dbReference type="Proteomes" id="UP000000851">
    <property type="component" value="Chromosome"/>
</dbReference>
<dbReference type="GO" id="GO:0102525">
    <property type="term" value="F:2-oxoglutarate, L-arginine oxygenase (succinate-forming) activity"/>
    <property type="evidence" value="ECO:0007669"/>
    <property type="project" value="UniProtKB-EC"/>
</dbReference>
<dbReference type="GO" id="GO:0016706">
    <property type="term" value="F:2-oxoglutarate-dependent dioxygenase activity"/>
    <property type="evidence" value="ECO:0000314"/>
    <property type="project" value="UniProtKB"/>
</dbReference>
<dbReference type="GO" id="GO:0005506">
    <property type="term" value="F:iron ion binding"/>
    <property type="evidence" value="ECO:0007669"/>
    <property type="project" value="InterPro"/>
</dbReference>
<dbReference type="FunFam" id="3.60.130.10:FF:000013">
    <property type="entry name" value="Alpha-ketoglutarate-dependent L-arginine hydroxylase"/>
    <property type="match status" value="1"/>
</dbReference>
<dbReference type="Gene3D" id="3.60.130.10">
    <property type="entry name" value="Clavaminate synthase-like"/>
    <property type="match status" value="1"/>
</dbReference>
<dbReference type="InterPro" id="IPR053447">
    <property type="entry name" value="Alpha-KG_dependent_hydroxylase"/>
</dbReference>
<dbReference type="InterPro" id="IPR023966">
    <property type="entry name" value="Arginine_beta-hydroxylase"/>
</dbReference>
<dbReference type="InterPro" id="IPR014503">
    <property type="entry name" value="Clavaminate_syn-like"/>
</dbReference>
<dbReference type="InterPro" id="IPR042098">
    <property type="entry name" value="TauD-like_sf"/>
</dbReference>
<dbReference type="InterPro" id="IPR003819">
    <property type="entry name" value="TauD/TfdA-like"/>
</dbReference>
<dbReference type="NCBIfam" id="NF041363">
    <property type="entry name" value="GntD_guanitoxin"/>
    <property type="match status" value="1"/>
</dbReference>
<dbReference type="NCBIfam" id="TIGR03946">
    <property type="entry name" value="viomycin_VioC"/>
    <property type="match status" value="1"/>
</dbReference>
<dbReference type="Pfam" id="PF02668">
    <property type="entry name" value="TauD"/>
    <property type="match status" value="1"/>
</dbReference>
<dbReference type="PIRSF" id="PIRSF019543">
    <property type="entry name" value="Clavaminate_syn"/>
    <property type="match status" value="1"/>
</dbReference>
<dbReference type="SUPFAM" id="SSF51197">
    <property type="entry name" value="Clavaminate synthase-like"/>
    <property type="match status" value="1"/>
</dbReference>
<proteinExistence type="evidence at protein level"/>
<sequence length="343" mass="39116">MHRLALTAQDNLAVAPMLADLAGRYPDIEDPELIRSAPVLAAKGLPPHLLAFLDDFRLREPSALCVISGLDVDQDRLGPTPEHWRDSQIGSRSLNLEIFFLLCGAALGDVFGWATQQDGRIMHDVLPIKGHEHYELGSNSLQHLSWHTEDSFHPCRGDYVALMCLKNPYEAETMVCDAGDLDWPNLDVDALFEPVFTQMPDNSHLPQNTAESTGDPTKDRLRARSFELIKSWNENPVRRAVLYGDRQNPYMALDPYHMKMDDWSERSLEAFQALCEEIEAKMQDVVLHPGDIAFIDNFRAVHGRRSFRARYDGSDRWLKRLNITRNLRGSRAWRPAPDDRVIY</sequence>
<organism>
    <name type="scientific">Catenulispora acidiphila (strain DSM 44928 / JCM 14897 / NBRC 102108 / NRRL B-24433 / ID139908)</name>
    <dbReference type="NCBI Taxonomy" id="479433"/>
    <lineage>
        <taxon>Bacteria</taxon>
        <taxon>Bacillati</taxon>
        <taxon>Actinomycetota</taxon>
        <taxon>Actinomycetes</taxon>
        <taxon>Catenulisporales</taxon>
        <taxon>Catenulisporaceae</taxon>
        <taxon>Catenulispora</taxon>
    </lineage>
</organism>
<keyword id="KW-0223">Dioxygenase</keyword>
<keyword id="KW-0408">Iron</keyword>
<keyword id="KW-0479">Metal-binding</keyword>
<keyword id="KW-0560">Oxidoreductase</keyword>
<keyword id="KW-1185">Reference proteome</keyword>
<reference key="1">
    <citation type="journal article" date="2009" name="Stand. Genomic Sci.">
        <title>Complete genome sequence of Catenulispora acidiphila type strain (ID 139908).</title>
        <authorList>
            <person name="Copeland A."/>
            <person name="Lapidus A."/>
            <person name="Glavina Del Rio T."/>
            <person name="Nolan M."/>
            <person name="Lucas S."/>
            <person name="Chen F."/>
            <person name="Tice H."/>
            <person name="Cheng J.F."/>
            <person name="Bruce D."/>
            <person name="Goodwin L."/>
            <person name="Pitluck S."/>
            <person name="Mikhailova N."/>
            <person name="Pati A."/>
            <person name="Ivanova N."/>
            <person name="Mavromatis K."/>
            <person name="Chen A."/>
            <person name="Palaniappan K."/>
            <person name="Chain P."/>
            <person name="Land M."/>
            <person name="Hauser L."/>
            <person name="Chang Y.J."/>
            <person name="Jeffries C.D."/>
            <person name="Chertkov O."/>
            <person name="Brettin T."/>
            <person name="Detter J.C."/>
            <person name="Han C."/>
            <person name="Ali Z."/>
            <person name="Tindall B.J."/>
            <person name="Goker M."/>
            <person name="Bristow J."/>
            <person name="Eisen J.A."/>
            <person name="Markowitz V."/>
            <person name="Hugenholtz P."/>
            <person name="Kyrpides N.C."/>
            <person name="Klenk H.P."/>
        </authorList>
    </citation>
    <scope>NUCLEOTIDE SEQUENCE [LARGE SCALE GENOMIC DNA]</scope>
    <source>
        <strain>DSM 44928 / JCM 14897 / NBRC 102108 / NRRL B-24433 / ID139908</strain>
    </source>
</reference>
<reference key="2">
    <citation type="journal article" date="2014" name="ChemCatChem">
        <title>Synthesis of mono- and dihydroxylated amino acids with new alpha-ketoglutarate-dependent dioxygenases: biocatalytic oxidation of C-H bonds.</title>
        <authorList>
            <person name="Baud D."/>
            <person name="Saaidi P.-L."/>
            <person name="Monfleur A."/>
            <person name="Harari M."/>
            <person name="Cuccaro J."/>
            <person name="Fossey A."/>
            <person name="Besnard M."/>
            <person name="Debard A."/>
            <person name="Mariage A."/>
            <person name="Pellouin V."/>
            <person name="Petit J.-L."/>
            <person name="Salanoubat M."/>
            <person name="Weissenbach J."/>
            <person name="de Berardinis V."/>
            <person name="Zaparucha A."/>
        </authorList>
    </citation>
    <scope>FUNCTION</scope>
    <scope>CATALYTIC ACTIVITY</scope>
    <scope>SUBSTRATE SPECIFICITY</scope>
    <scope>BIOTECHNOLOGY</scope>
</reference>
<protein>
    <recommendedName>
        <fullName evidence="6">L-ornithine/L-arginine 3-hydroxylase</fullName>
        <ecNumber evidence="3">1.14.11.-</ecNumber>
        <ecNumber evidence="3">1.14.11.41</ecNumber>
    </recommendedName>
    <alternativeName>
        <fullName evidence="4">Alpha-ketoglutarate-dependent dioxygenase</fullName>
    </alternativeName>
    <alternativeName>
        <fullName evidence="4">L-ornithine/L-arginine hydroxylase</fullName>
    </alternativeName>
    <alternativeName>
        <fullName evidence="4">ODO</fullName>
    </alternativeName>
</protein>